<evidence type="ECO:0000255" key="1">
    <source>
        <dbReference type="HAMAP-Rule" id="MF_01006"/>
    </source>
</evidence>
<organism>
    <name type="scientific">Burkholderia mallei (strain ATCC 23344)</name>
    <dbReference type="NCBI Taxonomy" id="243160"/>
    <lineage>
        <taxon>Bacteria</taxon>
        <taxon>Pseudomonadati</taxon>
        <taxon>Pseudomonadota</taxon>
        <taxon>Betaproteobacteria</taxon>
        <taxon>Burkholderiales</taxon>
        <taxon>Burkholderiaceae</taxon>
        <taxon>Burkholderia</taxon>
        <taxon>pseudomallei group</taxon>
    </lineage>
</organism>
<keyword id="KW-0046">Antibiotic resistance</keyword>
<keyword id="KW-0997">Cell inner membrane</keyword>
<keyword id="KW-1003">Cell membrane</keyword>
<keyword id="KW-0133">Cell shape</keyword>
<keyword id="KW-0961">Cell wall biogenesis/degradation</keyword>
<keyword id="KW-0378">Hydrolase</keyword>
<keyword id="KW-0472">Membrane</keyword>
<keyword id="KW-0573">Peptidoglycan synthesis</keyword>
<keyword id="KW-1185">Reference proteome</keyword>
<keyword id="KW-0812">Transmembrane</keyword>
<keyword id="KW-1133">Transmembrane helix</keyword>
<name>UPPP_BURMA</name>
<feature type="chain" id="PRO_0000151125" description="Undecaprenyl-diphosphatase">
    <location>
        <begin position="1"/>
        <end position="276"/>
    </location>
</feature>
<feature type="transmembrane region" description="Helical" evidence="1">
    <location>
        <begin position="85"/>
        <end position="105"/>
    </location>
</feature>
<feature type="transmembrane region" description="Helical" evidence="1">
    <location>
        <begin position="108"/>
        <end position="128"/>
    </location>
</feature>
<feature type="transmembrane region" description="Helical" evidence="1">
    <location>
        <begin position="187"/>
        <end position="207"/>
    </location>
</feature>
<feature type="transmembrane region" description="Helical" evidence="1">
    <location>
        <begin position="217"/>
        <end position="237"/>
    </location>
</feature>
<feature type="transmembrane region" description="Helical" evidence="1">
    <location>
        <begin position="253"/>
        <end position="273"/>
    </location>
</feature>
<gene>
    <name evidence="1" type="primary">uppP</name>
    <name type="ordered locus">BMA2168</name>
</gene>
<protein>
    <recommendedName>
        <fullName evidence="1">Undecaprenyl-diphosphatase</fullName>
        <ecNumber evidence="1">3.6.1.27</ecNumber>
    </recommendedName>
    <alternativeName>
        <fullName evidence="1">Bacitracin resistance protein</fullName>
    </alternativeName>
    <alternativeName>
        <fullName evidence="1">Undecaprenyl pyrophosphate phosphatase</fullName>
    </alternativeName>
</protein>
<dbReference type="EC" id="3.6.1.27" evidence="1"/>
<dbReference type="EMBL" id="CP000010">
    <property type="protein sequence ID" value="AAU49914.1"/>
    <property type="molecule type" value="Genomic_DNA"/>
</dbReference>
<dbReference type="RefSeq" id="WP_004185904.1">
    <property type="nucleotide sequence ID" value="NC_006348.1"/>
</dbReference>
<dbReference type="RefSeq" id="YP_103734.1">
    <property type="nucleotide sequence ID" value="NC_006348.1"/>
</dbReference>
<dbReference type="SMR" id="Q62HT6"/>
<dbReference type="KEGG" id="bma:BMA2168"/>
<dbReference type="PATRIC" id="fig|243160.12.peg.2235"/>
<dbReference type="eggNOG" id="COG1968">
    <property type="taxonomic scope" value="Bacteria"/>
</dbReference>
<dbReference type="HOGENOM" id="CLU_060296_2_0_4"/>
<dbReference type="Proteomes" id="UP000006693">
    <property type="component" value="Chromosome 1"/>
</dbReference>
<dbReference type="GO" id="GO:0005886">
    <property type="term" value="C:plasma membrane"/>
    <property type="evidence" value="ECO:0007669"/>
    <property type="project" value="UniProtKB-SubCell"/>
</dbReference>
<dbReference type="GO" id="GO:0050380">
    <property type="term" value="F:undecaprenyl-diphosphatase activity"/>
    <property type="evidence" value="ECO:0007669"/>
    <property type="project" value="UniProtKB-UniRule"/>
</dbReference>
<dbReference type="GO" id="GO:0071555">
    <property type="term" value="P:cell wall organization"/>
    <property type="evidence" value="ECO:0007669"/>
    <property type="project" value="UniProtKB-KW"/>
</dbReference>
<dbReference type="GO" id="GO:0009252">
    <property type="term" value="P:peptidoglycan biosynthetic process"/>
    <property type="evidence" value="ECO:0007669"/>
    <property type="project" value="UniProtKB-KW"/>
</dbReference>
<dbReference type="GO" id="GO:0008360">
    <property type="term" value="P:regulation of cell shape"/>
    <property type="evidence" value="ECO:0007669"/>
    <property type="project" value="UniProtKB-KW"/>
</dbReference>
<dbReference type="GO" id="GO:0046677">
    <property type="term" value="P:response to antibiotic"/>
    <property type="evidence" value="ECO:0007669"/>
    <property type="project" value="UniProtKB-UniRule"/>
</dbReference>
<dbReference type="HAMAP" id="MF_01006">
    <property type="entry name" value="Undec_diphosphatase"/>
    <property type="match status" value="1"/>
</dbReference>
<dbReference type="InterPro" id="IPR003824">
    <property type="entry name" value="UppP"/>
</dbReference>
<dbReference type="NCBIfam" id="NF001389">
    <property type="entry name" value="PRK00281.1-2"/>
    <property type="match status" value="1"/>
</dbReference>
<dbReference type="NCBIfam" id="NF001390">
    <property type="entry name" value="PRK00281.1-4"/>
    <property type="match status" value="1"/>
</dbReference>
<dbReference type="NCBIfam" id="TIGR00753">
    <property type="entry name" value="undec_PP_bacA"/>
    <property type="match status" value="1"/>
</dbReference>
<dbReference type="PANTHER" id="PTHR30622">
    <property type="entry name" value="UNDECAPRENYL-DIPHOSPHATASE"/>
    <property type="match status" value="1"/>
</dbReference>
<dbReference type="PANTHER" id="PTHR30622:SF3">
    <property type="entry name" value="UNDECAPRENYL-DIPHOSPHATASE"/>
    <property type="match status" value="1"/>
</dbReference>
<dbReference type="Pfam" id="PF02673">
    <property type="entry name" value="BacA"/>
    <property type="match status" value="1"/>
</dbReference>
<proteinExistence type="inferred from homology"/>
<accession>Q62HT6</accession>
<reference key="1">
    <citation type="journal article" date="2004" name="Proc. Natl. Acad. Sci. U.S.A.">
        <title>Structural flexibility in the Burkholderia mallei genome.</title>
        <authorList>
            <person name="Nierman W.C."/>
            <person name="DeShazer D."/>
            <person name="Kim H.S."/>
            <person name="Tettelin H."/>
            <person name="Nelson K.E."/>
            <person name="Feldblyum T.V."/>
            <person name="Ulrich R.L."/>
            <person name="Ronning C.M."/>
            <person name="Brinkac L.M."/>
            <person name="Daugherty S.C."/>
            <person name="Davidsen T.D."/>
            <person name="DeBoy R.T."/>
            <person name="Dimitrov G."/>
            <person name="Dodson R.J."/>
            <person name="Durkin A.S."/>
            <person name="Gwinn M.L."/>
            <person name="Haft D.H."/>
            <person name="Khouri H.M."/>
            <person name="Kolonay J.F."/>
            <person name="Madupu R."/>
            <person name="Mohammoud Y."/>
            <person name="Nelson W.C."/>
            <person name="Radune D."/>
            <person name="Romero C.M."/>
            <person name="Sarria S."/>
            <person name="Selengut J."/>
            <person name="Shamblin C."/>
            <person name="Sullivan S.A."/>
            <person name="White O."/>
            <person name="Yu Y."/>
            <person name="Zafar N."/>
            <person name="Zhou L."/>
            <person name="Fraser C.M."/>
        </authorList>
    </citation>
    <scope>NUCLEOTIDE SEQUENCE [LARGE SCALE GENOMIC DNA]</scope>
    <source>
        <strain>ATCC 23344</strain>
    </source>
</reference>
<sequence>MDWILICKALALGIVEGLTEFLPVSSTGHLIVAGSFLRFHPEQAKTFDVVIQFGAILAVCWEYRRRIIDVVTGLPAQREARRFTMNVVIATVPAVALALLFEKTIKSVLFAPVPVAVALVVGGAAILWVEGRQRERSEPARVQSIDALTPFDALKVGLAQCCALIPGMSRSGSTIIGGMLFGLERRVATEFSFFLAIPVIFGATLYETAKDWRAFNVDSVGLFAIGLVAAFVSAFACVRWLLRYVASHDFTAFAWYRIAFGLFVLLVGYSGWIEWT</sequence>
<comment type="function">
    <text evidence="1">Catalyzes the dephosphorylation of undecaprenyl diphosphate (UPP). Confers resistance to bacitracin.</text>
</comment>
<comment type="catalytic activity">
    <reaction evidence="1">
        <text>di-trans,octa-cis-undecaprenyl diphosphate + H2O = di-trans,octa-cis-undecaprenyl phosphate + phosphate + H(+)</text>
        <dbReference type="Rhea" id="RHEA:28094"/>
        <dbReference type="ChEBI" id="CHEBI:15377"/>
        <dbReference type="ChEBI" id="CHEBI:15378"/>
        <dbReference type="ChEBI" id="CHEBI:43474"/>
        <dbReference type="ChEBI" id="CHEBI:58405"/>
        <dbReference type="ChEBI" id="CHEBI:60392"/>
        <dbReference type="EC" id="3.6.1.27"/>
    </reaction>
</comment>
<comment type="subcellular location">
    <subcellularLocation>
        <location evidence="1">Cell inner membrane</location>
        <topology evidence="1">Multi-pass membrane protein</topology>
    </subcellularLocation>
</comment>
<comment type="miscellaneous">
    <text>Bacitracin is thought to be involved in the inhibition of peptidoglycan synthesis by sequestering undecaprenyl diphosphate, thereby reducing the pool of lipid carrier available.</text>
</comment>
<comment type="similarity">
    <text evidence="1">Belongs to the UppP family.</text>
</comment>